<organismHost>
    <name type="scientific">Pipistrellus abramus</name>
    <name type="common">Japanese pipistrelle</name>
    <name type="synonym">Pipistrellus javanicus abramus</name>
    <dbReference type="NCBI Taxonomy" id="105295"/>
</organismHost>
<name>R1A_BCHK5</name>
<evidence type="ECO:0000250" key="1"/>
<evidence type="ECO:0000250" key="2">
    <source>
        <dbReference type="UniProtKB" id="P0DTC1"/>
    </source>
</evidence>
<evidence type="ECO:0000255" key="3"/>
<evidence type="ECO:0000255" key="4">
    <source>
        <dbReference type="PROSITE-ProRule" id="PRU00214"/>
    </source>
</evidence>
<evidence type="ECO:0000255" key="5">
    <source>
        <dbReference type="PROSITE-ProRule" id="PRU00444"/>
    </source>
</evidence>
<evidence type="ECO:0000255" key="6">
    <source>
        <dbReference type="PROSITE-ProRule" id="PRU00490"/>
    </source>
</evidence>
<evidence type="ECO:0000255" key="7">
    <source>
        <dbReference type="PROSITE-ProRule" id="PRU00772"/>
    </source>
</evidence>
<evidence type="ECO:0000255" key="8">
    <source>
        <dbReference type="PROSITE-ProRule" id="PRU01289"/>
    </source>
</evidence>
<evidence type="ECO:0000255" key="9">
    <source>
        <dbReference type="PROSITE-ProRule" id="PRU01290"/>
    </source>
</evidence>
<evidence type="ECO:0000255" key="10">
    <source>
        <dbReference type="PROSITE-ProRule" id="PRU01291"/>
    </source>
</evidence>
<evidence type="ECO:0000255" key="11">
    <source>
        <dbReference type="PROSITE-ProRule" id="PRU01294"/>
    </source>
</evidence>
<evidence type="ECO:0000255" key="12">
    <source>
        <dbReference type="PROSITE-ProRule" id="PRU01295"/>
    </source>
</evidence>
<evidence type="ECO:0000255" key="13">
    <source>
        <dbReference type="PROSITE-ProRule" id="PRU01296"/>
    </source>
</evidence>
<evidence type="ECO:0000255" key="14">
    <source>
        <dbReference type="PROSITE-ProRule" id="PRU01297"/>
    </source>
</evidence>
<evidence type="ECO:0000255" key="15">
    <source>
        <dbReference type="PROSITE-ProRule" id="PRU01307"/>
    </source>
</evidence>
<evidence type="ECO:0000255" key="16">
    <source>
        <dbReference type="PROSITE-ProRule" id="PRU01308"/>
    </source>
</evidence>
<evidence type="ECO:0000255" key="17">
    <source>
        <dbReference type="PROSITE-ProRule" id="PRU01333"/>
    </source>
</evidence>
<evidence type="ECO:0000255" key="18">
    <source>
        <dbReference type="PROSITE-ProRule" id="PRU01334"/>
    </source>
</evidence>
<evidence type="ECO:0000255" key="19">
    <source>
        <dbReference type="PROSITE-ProRule" id="PRU01335"/>
    </source>
</evidence>
<evidence type="ECO:0000255" key="20">
    <source>
        <dbReference type="PROSITE-ProRule" id="PRU01336"/>
    </source>
</evidence>
<evidence type="ECO:0000255" key="21">
    <source>
        <dbReference type="PROSITE-ProRule" id="PRU01337"/>
    </source>
</evidence>
<evidence type="ECO:0000255" key="22">
    <source>
        <dbReference type="PROSITE-ProRule" id="PRU01338"/>
    </source>
</evidence>
<evidence type="ECO:0000305" key="23"/>
<keyword id="KW-1072">Activation of host autophagy by virus</keyword>
<keyword id="KW-1132">Decay of host mRNAs by virus</keyword>
<keyword id="KW-1015">Disulfide bond</keyword>
<keyword id="KW-0255">Endonuclease</keyword>
<keyword id="KW-1262">Eukaryotic host gene expression shutoff by virus</keyword>
<keyword id="KW-1193">Eukaryotic host translation shutoff by virus</keyword>
<keyword id="KW-1035">Host cytoplasm</keyword>
<keyword id="KW-1190">Host gene expression shutoff by virus</keyword>
<keyword id="KW-1043">Host membrane</keyword>
<keyword id="KW-1192">Host mRNA suppression by virus</keyword>
<keyword id="KW-0945">Host-virus interaction</keyword>
<keyword id="KW-0378">Hydrolase</keyword>
<keyword id="KW-1090">Inhibition of host innate immune response by virus</keyword>
<keyword id="KW-1114">Inhibition of host interferon signaling pathway by virus</keyword>
<keyword id="KW-1092">Inhibition of host IRF3 by virus</keyword>
<keyword id="KW-1095">Inhibition of host ISG15 by virus</keyword>
<keyword id="KW-1113">Inhibition of host RLR pathway by virus</keyword>
<keyword id="KW-0922">Interferon antiviral system evasion</keyword>
<keyword id="KW-0472">Membrane</keyword>
<keyword id="KW-0479">Metal-binding</keyword>
<keyword id="KW-0489">Methyltransferase</keyword>
<keyword id="KW-1127">Modulation of host ubiquitin pathway by viral deubiquitinase</keyword>
<keyword id="KW-1130">Modulation of host ubiquitin pathway by virus</keyword>
<keyword id="KW-0540">Nuclease</keyword>
<keyword id="KW-0645">Protease</keyword>
<keyword id="KW-1185">Reference proteome</keyword>
<keyword id="KW-0677">Repeat</keyword>
<keyword id="KW-0688">Ribosomal frameshifting</keyword>
<keyword id="KW-0694">RNA-binding</keyword>
<keyword id="KW-0788">Thiol protease</keyword>
<keyword id="KW-0808">Transferase</keyword>
<keyword id="KW-0812">Transmembrane</keyword>
<keyword id="KW-1133">Transmembrane helix</keyword>
<keyword id="KW-0833">Ubl conjugation pathway</keyword>
<keyword id="KW-0899">Viral immunoevasion</keyword>
<keyword id="KW-0862">Zinc</keyword>
<keyword id="KW-0863">Zinc-finger</keyword>
<sequence>MSFVAGVAPQGARGKYRAELNTEKRTDHVSLKASLCDAGDLVLKISPWFMDGESAYKHVSEQLSKGSKLLFVPQTLKGFIRHLPGPRVYLVERLTGGTYSDPFMVNQLAYQNAAGEGVIGTTLQGKRVGMFFPFDADLVTGEFQFLLRKKGFGGNRFRDAPWDYNWTPYSDLMDALEADPCGKYSQSLLKKLVGGDFTPIDQYMCGKNGKPIAEFAALMASEGITKLADVEAEVKSRTDSDRYIVFKNKLYRIVWNVQRKDVAYSKQSAFTMNSIVQLDTMEDVPRHSFTIGSEIQVIAPSTAVQANGHLNLKQRLLYAFYGKQAVSEPNYIYHSAYVDCTSCGKGSWLTGNAVQGFACDCGAHYCANDVDLQSSGLVRKNAVLLTTCPCNKDGECKHTLPQLVSMMTDKCDVEVVGKTFILTYGGVIYAYMGCSGGTMHFIPRAKSCVSKIGDAIFTGCTGTWSKVCETANLFLERAQHAINFVNEFVLTETVVALLSGTTSSIEELRDLCRNATFEKVRDYLTPRGWIVTMGSYIEGVINVGAAGVCNAALNAPFIVLSGLGESFKKVAATPWKLCSSLRETLDHYADSITYRVFPYDIPCDVTDYTALLLDCAVLTGASAYFVARYVDEKVEQLTNLVFSSCQSAVAAFVQACMSTYKATAKFISDMFTLIKVVSERLYVYTSVGFVVVGDYSSQLLKQFMHILSKAMQLLHTTVSWAGSKLPSVVYNGRDSLVFPSGTYYCVSTQGRSLQDQFDLVIPGDLSKKQIGILEPTPNSTTVDKKINTNVVEVVVGQLEPTKEHSPELVVGDYVIISNKIFVRSVEDSETVFYPLCTDGKIVPTLFRLKGGAPPKGVKFGGEQTKEITAVRSVSVDYDVHPVLDALLAGSELATFTVEKDLPVKDFVDVVKDEVIELLSKLLRGYNVDGFDLEDFADTPCYVYNAEGDLAWSSTMTFSVNPVEEVEEECDDDYVEDEYLSEEMLVEEDENSWAAAVEAVIPMEDVQLDTLVAEIDVSEPADDVAEQASTEEVEVPSACVLEASQVANAAEVESCEAEVSSSIPLHEDANAAKANDCAEGMPALDSTETVSKLSVDTPVGDVTQDDATSSNATVISEDVHTATHSKGLVAVPEVVPEKALGTSVERMRSTSEWTVVETSLKQETAVIVKNDSSAKPQRVKKPKAENPLKNFKHIVLNNDVTLVFGDAIAVARATEDCILVNAANTHLKHGGGIAAAIDRASGGLVQAESDDYVNFYGPLNVGDSTLLKGHGLATGILHVVGPDARANQDIQLLKRCYKAFNKYPLVVSPLISAGIFCVEPRVSLEYLLSVVHTKTYVVVNSEKVYNDLAAPKPPTGLTYSHEGWRGIIRNAKSFGFTCFICTDQSANAKLLKGRGVDLTKKTQTVDGVKYYLYSSKDPLTDIITAANACKGICAMPIGYVTHGLDLAQAGQQVKKITVPYVCLLASKDQVPILNSDVAVQTPEQSFINTVIANGGYHCWHLVTGELIVKGVSYRKLLNWSDQTICYADNKFYVVKGQIALPFDSLEKCRTYLTSRAAQQKNVDVLVTIDGVNFRTVVLNNTTTYRVQLGSVFYKGSDISDTIPTEKMSGEAVYLADNLSEAEKAVLSEVYGTADTAFLHRYYSLLALVKKWKYTVHDGVKSLKLNSNNCYVNVTMLMLDMLKEIKFIVPALQAAYLKHKGGDSTEFIALIMAYGDCTYGEPDDASRLLHTILSKAELTTQAKMVWRQWCNVCGVQDTTTTGLKACIYVGMNSLDELHATHEECCQCGDVRKRQLVEHNAPWLLLSGLNEAKVMTPTSQSAGPDYTAFNVFQGVETSVGHYLHVRVKDNLLYKYDSGSLSKTSDMKCKMTDVYYPKQRYSADCNVVVYSLDGNTWADVDPDLSAFYMKDGKYFTKKPVIEYSPATILSGSVYTNSCLVGHDGTIGSDAISSSFNNLLGFDNSKPVSKKLTYSFFPDFEGDVILTEYSTYDPIYKNGAMLHGKPILWVNNSKFDSALNKFNRATLRQVYDIAPVTLENKYTVLQDNQIQQVEVEAPKEDAKPQSPVQVAEDIDNKLPIIKCKGLKKPFVKDGYSFVNDPQGVNVIDTLGIDDLRALYVDRNLRLIVLKENNWSALFNIHTVEKGDLSVIAASGSITRRVKILLGASSLFAQFASVTVNVTTAMGKALGRMTRNVITNTGIIGQGFALLKMLLILPFTFWKSKNQSTVKVEVGALRTAGIVTTNVVKQCASAAYDVLVVKFKRIDWKSTLRLLFLICTTGLLLSSLYYLFLFHQVLTSDVMLDGAEGMLATYRELRSYLGIHSLCDGMVEAYRNVSYDVNDFCSNRSALCNWCLIGQDSLTRYSAFQMIQTHVTSYVINIDWVWFVMEFALAYVLYTSTFNVLLLVVSSQYFFSYTGAFVNWRSYNYLVSGYFFCVTHIPLLGLVRIYNFLACLWFLRRFYNHVINGCKDTACLLCYKRNRLTRVEASTVVCGSKRTFYIVANGGTSFCCRHNWNCVDCDTAGIGNTFICEEVANDLTTSLRRLVKPTDKSHYYVESVTVKDSVVQLHYSREGASCYERYPLCYFTNLDKLKFKEVCKTPTGIPEHNFLIYDSSDRGQENLARSACVYYSQVLSKPMLLVDSNMVTTVGDSREIASKMLDSYVNSFISLFGVNRDKLDKLVATARDCVKRGDDFQTVIKTFTDAARGPAGVESDVETSSIVDALQYAYKHDLQLTTEGFNNYVPSYIKPDSVATADLGCLIDLNAASVNQTSIRNANGACIWNSSDYMKLSDSLKRQIRIACRKCNIPFRLTTSRLRSADNILSVKFSATKLSGGAPKWLLKLRDFTWKSYCVVTLVVFAMAVLSYLCLPAFNMSQVSFHEDRILTYKVVENGIIRDITPSDTCFANKYQSFSKWFNEHYGGLFNNDISCPVTVAVIAGVAGARVPNLPANVAWVGRQIVLFVSRVFASSNNVCYTPTAEIPYERFSDSGCVLASECTLFRDAEGKINPYCYDPTVLPGASAYDQMKPHVRYDMYDSDMYIKFPEVVFESTLRITKTLATRYCRFGSCEDANEGVCITTNGSWAIYNDHYANKPGVYCGDNYFDIVRRLGLSLFQPVTYFQLSTSLALGVMLCIFLTIAFYYVNKVKRALADYTQCAVVAVAAALLNSLCLCFVVSNPLLVLPYTALYYYATFYLTGEPAFVMHVSWFVMFGTVVPIWMVFAYIVGVCLRHLLWVMAYFSKKHVEVFTDGKLNCSFQDAAANIFVINKDTYVALRNSITQDSYNRYLSMFNKYKYYSGAMDTASYREASAAHLCKALQVYSETGSDVLFQPPNCSVTSSVLQSGLVKMAAPSGVVENCMVQVTCGSMTLNGLWLDNYVWCPRHVMCPADQLSDPNYDALLVSKTNLSFIVQKNVGAPANLRVVGHTMVGTLLKLTVESANPQTPAYTFTTVKPGASFSVLACYNGRPTGVFMVNMRQNSTIKGSFLCGSCGSVGYTQEGNVINFCYMHQMELSNGTHTGCAFDGVMYGAFEDRQVHQVQLSDKYCTINIVAWLYAAILNGCNWFVKPNKTGIATFNEWAMSNQFTEFIGTQSVDMLAHKTGVSVEQLLYAIQTLHKGFQGKTILGNSMLEDEFTPDDVNMQVMGVVMQSGVKRISYGLVHWLFTTLLLAYVATLQLTKFTIWNYLFEVIPLQLTPLVLCVMACVMLTVKHKHTFLTLFLLPTAICLTYANIVYEPQTPVSSALIAVANWLNPASVYMRTTHTDLGVYLSLCFALAVVVRRLYRPNASNLALALGSAMVWFYTYTTGDCSSPLTYLMFLTTLTSDYTVTVFLAVNVAKFFARVVFLYAPHAGFIFPEVKLVLLMYLAVGYFCTVYFGVFSLLNLKLRVPLGVYDYTVSTQEFRYLTGNGLHAPRNSWEALRLNMKLIGIGGTPCIKIASVQSKLTDLKCTSVVLLSVLQQLHLEANSKAWAHCVKLHNDILAATDPTEAFDNFVCLFATLMSFSANVDLEALASDLLDHPSVLQATLSEFSHLASYAELEAAQSSYQKALNSGDASPQVLKALQKAVNIAKNAYEKDKAVARKLERMAEQAMTSMYKQARAEDKKAKIVSAMQTMLFGMIKKLDNDVLNGVISNARNGCVPLSVVPLCASNKLRVVIPDITIWNKVVTWPSLSYAGALWDISLINNVDGEVVKSSDVTETNESLTWPLVLECTRAASSAVTLQNNEIRPSGLKTMVVSAGIDHANCNTSSLAYYEPVEGRKMLMGILSENAHLKWAKVEGRDGFVNIELQPPCKFLIAGPKGPEVRYLYFVKNLNNLHRGQLLGHIAATVRLQAGSNTEFAINSSVLSAVTFSVDPGKAYLDFVNAGGAPLTNCVKMLTPKTGTGIAVSVKPEANADQDTYGGASVCLYCRAHIEHPDVTGVCKFKGKFVQVPLHIRDPVGFCLQNTPCNVCQFWIGHGCNCDALRGTTIPQSKDSNFLNESGVLL</sequence>
<gene>
    <name type="ORF">1a</name>
</gene>
<reference key="1">
    <citation type="journal article" date="2007" name="J. Virol.">
        <title>Comparative analysis of twelve genomes of three novel group 2c and group 2d coronaviruses reveals unique group and subgroup features.</title>
        <authorList>
            <person name="Woo P.C.Y."/>
            <person name="Wang M."/>
            <person name="Lau S.K.P."/>
            <person name="Xu H.F."/>
            <person name="Poon R.W.S."/>
            <person name="Guo R."/>
            <person name="Wong B.H.L."/>
            <person name="Gao K."/>
            <person name="Tsoi H.-W."/>
            <person name="Huang Y."/>
            <person name="Li K.S.M."/>
            <person name="Lam C.S.F."/>
            <person name="Chan K.-H."/>
            <person name="Zheng B.-J."/>
            <person name="Yuen K.-Y."/>
        </authorList>
    </citation>
    <scope>NUCLEOTIDE SEQUENCE [GENOMIC RNA]</scope>
    <source>
        <strain>Isolate HKU5-1</strain>
    </source>
</reference>
<proteinExistence type="inferred from homology"/>
<dbReference type="EC" id="3.4.19.12"/>
<dbReference type="EC" id="3.4.22.-"/>
<dbReference type="EC" id="3.4.22.69"/>
<dbReference type="EC" id="2.7.7.50"/>
<dbReference type="EMBL" id="EF065509">
    <property type="status" value="NOT_ANNOTATED_CDS"/>
    <property type="molecule type" value="Genomic_RNA"/>
</dbReference>
<dbReference type="SMR" id="P0C6T5"/>
<dbReference type="IntAct" id="P0C6T5">
    <property type="interactions" value="1"/>
</dbReference>
<dbReference type="SABIO-RK" id="P0C6T5"/>
<dbReference type="Proteomes" id="UP000007451">
    <property type="component" value="Segment"/>
</dbReference>
<dbReference type="GO" id="GO:0033644">
    <property type="term" value="C:host cell membrane"/>
    <property type="evidence" value="ECO:0007669"/>
    <property type="project" value="UniProtKB-SubCell"/>
</dbReference>
<dbReference type="GO" id="GO:0044220">
    <property type="term" value="C:host cell perinuclear region of cytoplasm"/>
    <property type="evidence" value="ECO:0007669"/>
    <property type="project" value="UniProtKB-SubCell"/>
</dbReference>
<dbReference type="GO" id="GO:0016020">
    <property type="term" value="C:membrane"/>
    <property type="evidence" value="ECO:0007669"/>
    <property type="project" value="UniProtKB-KW"/>
</dbReference>
<dbReference type="GO" id="GO:0004843">
    <property type="term" value="F:cysteine-type deubiquitinase activity"/>
    <property type="evidence" value="ECO:0007669"/>
    <property type="project" value="UniProtKB-EC"/>
</dbReference>
<dbReference type="GO" id="GO:0004197">
    <property type="term" value="F:cysteine-type endopeptidase activity"/>
    <property type="evidence" value="ECO:0007669"/>
    <property type="project" value="InterPro"/>
</dbReference>
<dbReference type="GO" id="GO:0004519">
    <property type="term" value="F:endonuclease activity"/>
    <property type="evidence" value="ECO:0007669"/>
    <property type="project" value="UniProtKB-KW"/>
</dbReference>
<dbReference type="GO" id="GO:0002151">
    <property type="term" value="F:G-quadruplex RNA binding"/>
    <property type="evidence" value="ECO:0007669"/>
    <property type="project" value="InterPro"/>
</dbReference>
<dbReference type="GO" id="GO:0008168">
    <property type="term" value="F:methyltransferase activity"/>
    <property type="evidence" value="ECO:0007669"/>
    <property type="project" value="UniProtKB-KW"/>
</dbReference>
<dbReference type="GO" id="GO:0008242">
    <property type="term" value="F:omega peptidase activity"/>
    <property type="evidence" value="ECO:0007669"/>
    <property type="project" value="InterPro"/>
</dbReference>
<dbReference type="GO" id="GO:0003727">
    <property type="term" value="F:single-stranded RNA binding"/>
    <property type="evidence" value="ECO:0007669"/>
    <property type="project" value="InterPro"/>
</dbReference>
<dbReference type="GO" id="GO:0008270">
    <property type="term" value="F:zinc ion binding"/>
    <property type="evidence" value="ECO:0007669"/>
    <property type="project" value="UniProtKB-KW"/>
</dbReference>
<dbReference type="GO" id="GO:0032259">
    <property type="term" value="P:methylation"/>
    <property type="evidence" value="ECO:0007669"/>
    <property type="project" value="UniProtKB-KW"/>
</dbReference>
<dbReference type="GO" id="GO:0006508">
    <property type="term" value="P:proteolysis"/>
    <property type="evidence" value="ECO:0007669"/>
    <property type="project" value="UniProtKB-KW"/>
</dbReference>
<dbReference type="GO" id="GO:0010506">
    <property type="term" value="P:regulation of autophagy"/>
    <property type="evidence" value="ECO:0007669"/>
    <property type="project" value="InterPro"/>
</dbReference>
<dbReference type="GO" id="GO:0039520">
    <property type="term" value="P:symbiont-mediated activation of host autophagy"/>
    <property type="evidence" value="ECO:0007669"/>
    <property type="project" value="UniProtKB-KW"/>
</dbReference>
<dbReference type="GO" id="GO:0039595">
    <property type="term" value="P:symbiont-mediated degradation of host mRNA"/>
    <property type="evidence" value="ECO:0007669"/>
    <property type="project" value="UniProtKB-KW"/>
</dbReference>
<dbReference type="GO" id="GO:0039648">
    <property type="term" value="P:symbiont-mediated perturbation of host ubiquitin-like protein modification"/>
    <property type="evidence" value="ECO:0007669"/>
    <property type="project" value="UniProtKB-KW"/>
</dbReference>
<dbReference type="GO" id="GO:0039548">
    <property type="term" value="P:symbiont-mediated suppression of host cytoplasmic pattern recognition receptor signaling pathway via inhibition of IRF3 activity"/>
    <property type="evidence" value="ECO:0007669"/>
    <property type="project" value="UniProtKB-KW"/>
</dbReference>
<dbReference type="GO" id="GO:0039657">
    <property type="term" value="P:symbiont-mediated suppression of host gene expression"/>
    <property type="evidence" value="ECO:0007669"/>
    <property type="project" value="UniProtKB-KW"/>
</dbReference>
<dbReference type="GO" id="GO:0039579">
    <property type="term" value="P:symbiont-mediated suppression of host ISG15-protein conjugation"/>
    <property type="evidence" value="ECO:0007669"/>
    <property type="project" value="UniProtKB-KW"/>
</dbReference>
<dbReference type="GO" id="GO:0039502">
    <property type="term" value="P:symbiont-mediated suppression of host type I interferon-mediated signaling pathway"/>
    <property type="evidence" value="ECO:0007669"/>
    <property type="project" value="UniProtKB-KW"/>
</dbReference>
<dbReference type="GO" id="GO:0019079">
    <property type="term" value="P:viral genome replication"/>
    <property type="evidence" value="ECO:0007669"/>
    <property type="project" value="InterPro"/>
</dbReference>
<dbReference type="GO" id="GO:0019082">
    <property type="term" value="P:viral protein processing"/>
    <property type="evidence" value="ECO:0007669"/>
    <property type="project" value="InterPro"/>
</dbReference>
<dbReference type="GO" id="GO:0075523">
    <property type="term" value="P:viral translational frameshifting"/>
    <property type="evidence" value="ECO:0007669"/>
    <property type="project" value="UniProtKB-KW"/>
</dbReference>
<dbReference type="CDD" id="cd21901">
    <property type="entry name" value="alpha_betaCoV_Nsp10"/>
    <property type="match status" value="1"/>
</dbReference>
<dbReference type="CDD" id="cd21560">
    <property type="entry name" value="betaCoV-Nsp6"/>
    <property type="match status" value="1"/>
</dbReference>
<dbReference type="CDD" id="cd21517">
    <property type="entry name" value="betaCoV_Nsp2_MERS-like"/>
    <property type="match status" value="1"/>
</dbReference>
<dbReference type="CDD" id="cd21666">
    <property type="entry name" value="betaCoV_Nsp5_Mpro"/>
    <property type="match status" value="1"/>
</dbReference>
<dbReference type="CDD" id="cd21827">
    <property type="entry name" value="betaCoV_Nsp7"/>
    <property type="match status" value="1"/>
</dbReference>
<dbReference type="CDD" id="cd21831">
    <property type="entry name" value="betaCoV_Nsp8"/>
    <property type="match status" value="1"/>
</dbReference>
<dbReference type="CDD" id="cd21898">
    <property type="entry name" value="betaCoV_Nsp9"/>
    <property type="match status" value="1"/>
</dbReference>
<dbReference type="CDD" id="cd21732">
    <property type="entry name" value="betaCoV_PLPro"/>
    <property type="match status" value="1"/>
</dbReference>
<dbReference type="CDD" id="cd21473">
    <property type="entry name" value="cv_Nsp4_TM"/>
    <property type="match status" value="1"/>
</dbReference>
<dbReference type="CDD" id="cd21563">
    <property type="entry name" value="Macro_cv_SUD-M_Nsp3-like"/>
    <property type="match status" value="1"/>
</dbReference>
<dbReference type="CDD" id="cd21557">
    <property type="entry name" value="Macro_X_Nsp3-like"/>
    <property type="match status" value="1"/>
</dbReference>
<dbReference type="CDD" id="cd21878">
    <property type="entry name" value="MERS-CoV-like_Nsp1"/>
    <property type="match status" value="1"/>
</dbReference>
<dbReference type="CDD" id="cd21815">
    <property type="entry name" value="MERS-CoV-like_Nsp3_betaSM"/>
    <property type="match status" value="1"/>
</dbReference>
<dbReference type="CDD" id="cd21823">
    <property type="entry name" value="MERS-CoV-like_Nsp3_NAB"/>
    <property type="match status" value="1"/>
</dbReference>
<dbReference type="CDD" id="cd21523">
    <property type="entry name" value="SUD_C_MERS-CoV_Nsp3"/>
    <property type="match status" value="1"/>
</dbReference>
<dbReference type="CDD" id="cd21716">
    <property type="entry name" value="TM_Y_MERS-CoV-like_Nsp3_C"/>
    <property type="match status" value="1"/>
</dbReference>
<dbReference type="CDD" id="cd21467">
    <property type="entry name" value="Ubl1_cv_Nsp3_N-like"/>
    <property type="match status" value="1"/>
</dbReference>
<dbReference type="FunFam" id="1.10.150.420:FF:000001">
    <property type="entry name" value="Replicase polyprotein"/>
    <property type="match status" value="1"/>
</dbReference>
<dbReference type="FunFam" id="2.40.10.10:FF:000045">
    <property type="entry name" value="Replicase polyprotein 1a"/>
    <property type="match status" value="1"/>
</dbReference>
<dbReference type="Gene3D" id="1.10.8.1190">
    <property type="match status" value="1"/>
</dbReference>
<dbReference type="Gene3D" id="2.60.120.1680">
    <property type="match status" value="1"/>
</dbReference>
<dbReference type="Gene3D" id="3.10.20.350">
    <property type="match status" value="1"/>
</dbReference>
<dbReference type="Gene3D" id="3.10.20.540">
    <property type="match status" value="1"/>
</dbReference>
<dbReference type="Gene3D" id="6.10.250.2820">
    <property type="match status" value="1"/>
</dbReference>
<dbReference type="Gene3D" id="1.10.150.420">
    <property type="entry name" value="Coronavirus nonstructural protein 4 C-terminus"/>
    <property type="match status" value="1"/>
</dbReference>
<dbReference type="Gene3D" id="3.40.220.10">
    <property type="entry name" value="Leucine Aminopeptidase, subunit E, domain 1"/>
    <property type="match status" value="1"/>
</dbReference>
<dbReference type="Gene3D" id="1.10.1840.10">
    <property type="entry name" value="main proteinase (3clpro) structure, domain 3"/>
    <property type="match status" value="1"/>
</dbReference>
<dbReference type="Gene3D" id="3.40.220.20">
    <property type="entry name" value="Nsp3, SUD-M subdomain"/>
    <property type="match status" value="1"/>
</dbReference>
<dbReference type="Gene3D" id="1.10.8.370">
    <property type="entry name" value="nsp7 replicase"/>
    <property type="match status" value="1"/>
</dbReference>
<dbReference type="Gene3D" id="3.30.70.3540">
    <property type="entry name" value="Nsp8 replicase, head domain"/>
    <property type="match status" value="1"/>
</dbReference>
<dbReference type="Gene3D" id="2.40.10.250">
    <property type="entry name" value="Replicase NSP9"/>
    <property type="match status" value="1"/>
</dbReference>
<dbReference type="Gene3D" id="3.40.50.11020">
    <property type="entry name" value="Replicase polyprotein, nucleic acid-binding domain"/>
    <property type="match status" value="1"/>
</dbReference>
<dbReference type="Gene3D" id="2.40.10.10">
    <property type="entry name" value="Trypsin-like serine proteases"/>
    <property type="match status" value="2"/>
</dbReference>
<dbReference type="InterPro" id="IPR046443">
    <property type="entry name" value="a/bCoV_NSP1_glob"/>
</dbReference>
<dbReference type="InterPro" id="IPR046442">
    <property type="entry name" value="bCoV_NSP1_C"/>
</dbReference>
<dbReference type="InterPro" id="IPR043613">
    <property type="entry name" value="CoV_NSP2_C"/>
</dbReference>
<dbReference type="InterPro" id="IPR047573">
    <property type="entry name" value="CoV_NSP2_M"/>
</dbReference>
<dbReference type="InterPro" id="IPR049894">
    <property type="entry name" value="COV_NSP3_3ECTO"/>
</dbReference>
<dbReference type="InterPro" id="IPR043611">
    <property type="entry name" value="CoV_NSP3_C"/>
</dbReference>
<dbReference type="InterPro" id="IPR047566">
    <property type="entry name" value="CoV_NSP3_Y"/>
</dbReference>
<dbReference type="InterPro" id="IPR032505">
    <property type="entry name" value="CoV_NSP4_C"/>
</dbReference>
<dbReference type="InterPro" id="IPR043612">
    <property type="entry name" value="CoV_NSP4_N"/>
</dbReference>
<dbReference type="InterPro" id="IPR022733">
    <property type="entry name" value="DPUP_SUD_C_bCoV"/>
</dbReference>
<dbReference type="InterPro" id="IPR002589">
    <property type="entry name" value="Macro_dom"/>
</dbReference>
<dbReference type="InterPro" id="IPR043472">
    <property type="entry name" value="Macro_dom-like"/>
</dbReference>
<dbReference type="InterPro" id="IPR044371">
    <property type="entry name" value="Macro_X_NSP3-like"/>
</dbReference>
<dbReference type="InterPro" id="IPR036333">
    <property type="entry name" value="NSP10_sf_CoV"/>
</dbReference>
<dbReference type="InterPro" id="IPR021590">
    <property type="entry name" value="NSP1_glob_bCoV"/>
</dbReference>
<dbReference type="InterPro" id="IPR044388">
    <property type="entry name" value="NSP2_MERS-like"/>
</dbReference>
<dbReference type="InterPro" id="IPR043615">
    <property type="entry name" value="NSP2_N_CoV"/>
</dbReference>
<dbReference type="InterPro" id="IPR024375">
    <property type="entry name" value="NSP3_bCoV"/>
</dbReference>
<dbReference type="InterPro" id="IPR047567">
    <property type="entry name" value="NSP3_G2M_bCoV"/>
</dbReference>
<dbReference type="InterPro" id="IPR032592">
    <property type="entry name" value="NSP3_NAB_bCoV"/>
</dbReference>
<dbReference type="InterPro" id="IPR042570">
    <property type="entry name" value="NSP3_NAB_bCoV_sf"/>
</dbReference>
<dbReference type="InterPro" id="IPR038400">
    <property type="entry name" value="NSP3_SUD-M_sf_bCoV"/>
</dbReference>
<dbReference type="InterPro" id="IPR044382">
    <property type="entry name" value="NSP3_SUD_C_MERS-CoV"/>
</dbReference>
<dbReference type="InterPro" id="IPR044357">
    <property type="entry name" value="NSP3_Ubl1_dom_CoV"/>
</dbReference>
<dbReference type="InterPro" id="IPR044353">
    <property type="entry name" value="Nsp3_Ubl2_dom_CoV"/>
</dbReference>
<dbReference type="InterPro" id="IPR038083">
    <property type="entry name" value="NSP3A-like"/>
</dbReference>
<dbReference type="InterPro" id="IPR038123">
    <property type="entry name" value="NSP4_C_sf_CoV"/>
</dbReference>
<dbReference type="InterPro" id="IPR044367">
    <property type="entry name" value="NSP6_betaCoV"/>
</dbReference>
<dbReference type="InterPro" id="IPR043610">
    <property type="entry name" value="NSP6_CoV"/>
</dbReference>
<dbReference type="InterPro" id="IPR014828">
    <property type="entry name" value="NSP7_CoV"/>
</dbReference>
<dbReference type="InterPro" id="IPR037204">
    <property type="entry name" value="NSP7_sf_CoV"/>
</dbReference>
<dbReference type="InterPro" id="IPR014829">
    <property type="entry name" value="NSP8_CoV"/>
</dbReference>
<dbReference type="InterPro" id="IPR037230">
    <property type="entry name" value="NSP8_sf_CoV"/>
</dbReference>
<dbReference type="InterPro" id="IPR014822">
    <property type="entry name" value="NSP9_CoV"/>
</dbReference>
<dbReference type="InterPro" id="IPR036499">
    <property type="entry name" value="NSP9_sf_CoV"/>
</dbReference>
<dbReference type="InterPro" id="IPR013016">
    <property type="entry name" value="Peptidase_C16_CoV"/>
</dbReference>
<dbReference type="InterPro" id="IPR008740">
    <property type="entry name" value="Peptidase_C30_CoV"/>
</dbReference>
<dbReference type="InterPro" id="IPR043477">
    <property type="entry name" value="Peptidase_C30_dom3_CoV"/>
</dbReference>
<dbReference type="InterPro" id="IPR009003">
    <property type="entry name" value="Peptidase_S1_PA"/>
</dbReference>
<dbReference type="InterPro" id="IPR043504">
    <property type="entry name" value="Peptidase_S1_PA_chymotrypsin"/>
</dbReference>
<dbReference type="InterPro" id="IPR043177">
    <property type="entry name" value="PLpro_N_sf_CoV"/>
</dbReference>
<dbReference type="InterPro" id="IPR043503">
    <property type="entry name" value="PLpro_palm_finger_dom_CoV"/>
</dbReference>
<dbReference type="InterPro" id="IPR043178">
    <property type="entry name" value="PLpro_thumb_sf_CoV"/>
</dbReference>
<dbReference type="InterPro" id="IPR018995">
    <property type="entry name" value="RNA_synth_NSP10_CoV"/>
</dbReference>
<dbReference type="Pfam" id="PF16251">
    <property type="entry name" value="bCoV_NAB"/>
    <property type="match status" value="1"/>
</dbReference>
<dbReference type="Pfam" id="PF11501">
    <property type="entry name" value="bCoV_NSP1"/>
    <property type="match status" value="1"/>
</dbReference>
<dbReference type="Pfam" id="PF11633">
    <property type="entry name" value="bCoV_SUD_M"/>
    <property type="match status" value="1"/>
</dbReference>
<dbReference type="Pfam" id="PF09401">
    <property type="entry name" value="CoV_NSP10"/>
    <property type="match status" value="1"/>
</dbReference>
<dbReference type="Pfam" id="PF19212">
    <property type="entry name" value="CoV_NSP2_C"/>
    <property type="match status" value="1"/>
</dbReference>
<dbReference type="Pfam" id="PF19211">
    <property type="entry name" value="CoV_NSP2_N"/>
    <property type="match status" value="1"/>
</dbReference>
<dbReference type="Pfam" id="PF19218">
    <property type="entry name" value="CoV_NSP3_C"/>
    <property type="match status" value="1"/>
</dbReference>
<dbReference type="Pfam" id="PF16348">
    <property type="entry name" value="CoV_NSP4_C"/>
    <property type="match status" value="1"/>
</dbReference>
<dbReference type="Pfam" id="PF19217">
    <property type="entry name" value="CoV_NSP4_N"/>
    <property type="match status" value="1"/>
</dbReference>
<dbReference type="Pfam" id="PF19213">
    <property type="entry name" value="CoV_NSP6"/>
    <property type="match status" value="1"/>
</dbReference>
<dbReference type="Pfam" id="PF08716">
    <property type="entry name" value="CoV_NSP7"/>
    <property type="match status" value="1"/>
</dbReference>
<dbReference type="Pfam" id="PF08717">
    <property type="entry name" value="CoV_NSP8"/>
    <property type="match status" value="1"/>
</dbReference>
<dbReference type="Pfam" id="PF08710">
    <property type="entry name" value="CoV_NSP9"/>
    <property type="match status" value="1"/>
</dbReference>
<dbReference type="Pfam" id="PF08715">
    <property type="entry name" value="CoV_peptidase"/>
    <property type="match status" value="1"/>
</dbReference>
<dbReference type="Pfam" id="PF01661">
    <property type="entry name" value="Macro"/>
    <property type="match status" value="1"/>
</dbReference>
<dbReference type="Pfam" id="PF05409">
    <property type="entry name" value="Peptidase_C30"/>
    <property type="match status" value="1"/>
</dbReference>
<dbReference type="SMART" id="SM00506">
    <property type="entry name" value="A1pp"/>
    <property type="match status" value="1"/>
</dbReference>
<dbReference type="SUPFAM" id="SSF144246">
    <property type="entry name" value="Coronavirus NSP10-like"/>
    <property type="match status" value="1"/>
</dbReference>
<dbReference type="SUPFAM" id="SSF140367">
    <property type="entry name" value="Coronavirus NSP7-like"/>
    <property type="match status" value="1"/>
</dbReference>
<dbReference type="SUPFAM" id="SSF143076">
    <property type="entry name" value="Coronavirus NSP8-like"/>
    <property type="match status" value="1"/>
</dbReference>
<dbReference type="SUPFAM" id="SSF52949">
    <property type="entry name" value="Macro domain-like"/>
    <property type="match status" value="1"/>
</dbReference>
<dbReference type="SUPFAM" id="SSF159936">
    <property type="entry name" value="NSP3A-like"/>
    <property type="match status" value="1"/>
</dbReference>
<dbReference type="SUPFAM" id="SSF101816">
    <property type="entry name" value="Replicase NSP9"/>
    <property type="match status" value="1"/>
</dbReference>
<dbReference type="SUPFAM" id="SSF50494">
    <property type="entry name" value="Trypsin-like serine proteases"/>
    <property type="match status" value="1"/>
</dbReference>
<dbReference type="PROSITE" id="PS51963">
    <property type="entry name" value="BCOV_NSP1_C"/>
    <property type="match status" value="1"/>
</dbReference>
<dbReference type="PROSITE" id="PS51942">
    <property type="entry name" value="BCOV_NSP3C_C"/>
    <property type="match status" value="1"/>
</dbReference>
<dbReference type="PROSITE" id="PS51941">
    <property type="entry name" value="BCOV_NSP3C_M"/>
    <property type="match status" value="1"/>
</dbReference>
<dbReference type="PROSITE" id="PS51994">
    <property type="entry name" value="BCOV_NSP3E_G2M"/>
    <property type="match status" value="1"/>
</dbReference>
<dbReference type="PROSITE" id="PS51945">
    <property type="entry name" value="BCOV_NSP3E_NAB"/>
    <property type="match status" value="1"/>
</dbReference>
<dbReference type="PROSITE" id="PS51993">
    <property type="entry name" value="COV_3ECTO"/>
    <property type="match status" value="1"/>
</dbReference>
<dbReference type="PROSITE" id="PS51952">
    <property type="entry name" value="COV_EXON_MTASE_COACT"/>
    <property type="match status" value="1"/>
</dbReference>
<dbReference type="PROSITE" id="PS51962">
    <property type="entry name" value="COV_NSP1"/>
    <property type="match status" value="1"/>
</dbReference>
<dbReference type="PROSITE" id="PS51991">
    <property type="entry name" value="COV_NSP2_C"/>
    <property type="match status" value="1"/>
</dbReference>
<dbReference type="PROSITE" id="PS51990">
    <property type="entry name" value="COV_NSP2_M"/>
    <property type="match status" value="1"/>
</dbReference>
<dbReference type="PROSITE" id="PS51989">
    <property type="entry name" value="COV_NSP2_N"/>
    <property type="match status" value="1"/>
</dbReference>
<dbReference type="PROSITE" id="PS51992">
    <property type="entry name" value="COV_NSP3_Y"/>
    <property type="match status" value="1"/>
</dbReference>
<dbReference type="PROSITE" id="PS51943">
    <property type="entry name" value="COV_NSP3A_UBL"/>
    <property type="match status" value="1"/>
</dbReference>
<dbReference type="PROSITE" id="PS51944">
    <property type="entry name" value="COV_NSP3D_UBL"/>
    <property type="match status" value="1"/>
</dbReference>
<dbReference type="PROSITE" id="PS51946">
    <property type="entry name" value="COV_NSP4C"/>
    <property type="match status" value="1"/>
</dbReference>
<dbReference type="PROSITE" id="PS51949">
    <property type="entry name" value="COV_NSP7"/>
    <property type="match status" value="1"/>
</dbReference>
<dbReference type="PROSITE" id="PS51950">
    <property type="entry name" value="COV_NSP8"/>
    <property type="match status" value="1"/>
</dbReference>
<dbReference type="PROSITE" id="PS51951">
    <property type="entry name" value="COV_NSP9_SSRNA_BD"/>
    <property type="match status" value="1"/>
</dbReference>
<dbReference type="PROSITE" id="PS51442">
    <property type="entry name" value="M_PRO"/>
    <property type="match status" value="1"/>
</dbReference>
<dbReference type="PROSITE" id="PS51154">
    <property type="entry name" value="MACRO"/>
    <property type="match status" value="1"/>
</dbReference>
<dbReference type="PROSITE" id="PS51124">
    <property type="entry name" value="PEPTIDASE_C16"/>
    <property type="match status" value="1"/>
</dbReference>
<feature type="chain" id="PRO_0000338098" description="Replicase polyprotein 1a">
    <location>
        <begin position="1"/>
        <end position="4481"/>
    </location>
</feature>
<feature type="chain" id="PRO_0000338099" description="Non-structural protein 1" evidence="3">
    <location>
        <begin position="1"/>
        <end position="195"/>
    </location>
</feature>
<feature type="chain" id="PRO_0000338100" description="Non-structural protein 2" evidence="3">
    <location>
        <begin position="196"/>
        <end position="851"/>
    </location>
</feature>
<feature type="chain" id="PRO_0000338101" description="Papain-like protease nsp3" evidence="3">
    <location>
        <begin position="852"/>
        <end position="2830"/>
    </location>
</feature>
<feature type="chain" id="PRO_0000338102" description="Non-structural protein 4" evidence="3">
    <location>
        <begin position="2831"/>
        <end position="3338"/>
    </location>
</feature>
<feature type="chain" id="PRO_0000338103" description="3C-like proteinase nsp5" evidence="3">
    <location>
        <begin position="3339"/>
        <end position="3644"/>
    </location>
</feature>
<feature type="chain" id="PRO_0000338104" description="Non-structural protein 6" evidence="3">
    <location>
        <begin position="3645"/>
        <end position="3936"/>
    </location>
</feature>
<feature type="chain" id="PRO_0000338105" description="Non-structural protein 7" evidence="3">
    <location>
        <begin position="3937"/>
        <end position="4019"/>
    </location>
</feature>
<feature type="chain" id="PRO_0000338106" description="Non-structural protein 8" evidence="3">
    <location>
        <begin position="4020"/>
        <end position="4218"/>
    </location>
</feature>
<feature type="chain" id="PRO_0000338107" description="RNA-capping enzyme subunit nsp9" evidence="3">
    <location>
        <begin position="4219"/>
        <end position="4328"/>
    </location>
</feature>
<feature type="chain" id="PRO_0000338109" description="Non-structural protein 11" evidence="3">
    <location>
        <begin position="4328"/>
        <end position="4481"/>
    </location>
</feature>
<feature type="chain" id="PRO_0000338108" description="Non-structural protein 10" evidence="3">
    <location>
        <begin position="4329"/>
        <end position="4467"/>
    </location>
</feature>
<feature type="transmembrane region" description="Helical" evidence="3">
    <location>
        <begin position="2196"/>
        <end position="2216"/>
    </location>
</feature>
<feature type="transmembrane region" description="Helical" evidence="3">
    <location>
        <begin position="2268"/>
        <end position="2288"/>
    </location>
</feature>
<feature type="transmembrane region" description="Helical" evidence="3">
    <location>
        <begin position="2372"/>
        <end position="2392"/>
    </location>
</feature>
<feature type="transmembrane region" description="Helical" evidence="3">
    <location>
        <begin position="2396"/>
        <end position="2416"/>
    </location>
</feature>
<feature type="transmembrane region" description="Helical" evidence="3">
    <location>
        <begin position="2421"/>
        <end position="2441"/>
    </location>
</feature>
<feature type="transmembrane region" description="Helical" evidence="3">
    <location>
        <begin position="2848"/>
        <end position="2868"/>
    </location>
</feature>
<feature type="transmembrane region" description="Helical" evidence="3">
    <location>
        <begin position="3119"/>
        <end position="3139"/>
    </location>
</feature>
<feature type="transmembrane region" description="Helical" evidence="3">
    <location>
        <begin position="3152"/>
        <end position="3172"/>
    </location>
</feature>
<feature type="transmembrane region" description="Helical" evidence="3">
    <location>
        <begin position="3203"/>
        <end position="3223"/>
    </location>
</feature>
<feature type="transmembrane region" description="Helical" evidence="3">
    <location>
        <begin position="3650"/>
        <end position="3670"/>
    </location>
</feature>
<feature type="transmembrane region" description="Helical" evidence="3">
    <location>
        <begin position="3684"/>
        <end position="3704"/>
    </location>
</feature>
<feature type="transmembrane region" description="Helical" evidence="3">
    <location>
        <begin position="3709"/>
        <end position="3729"/>
    </location>
</feature>
<feature type="transmembrane region" description="Helical" evidence="3">
    <location>
        <begin position="3760"/>
        <end position="3777"/>
    </location>
</feature>
<feature type="transmembrane region" description="Helical" evidence="3">
    <location>
        <begin position="3782"/>
        <end position="3802"/>
    </location>
</feature>
<feature type="transmembrane region" description="Helical" evidence="3">
    <location>
        <begin position="3823"/>
        <end position="3843"/>
    </location>
</feature>
<feature type="transmembrane region" description="Helical" evidence="3">
    <location>
        <begin position="3855"/>
        <end position="3875"/>
    </location>
</feature>
<feature type="domain" description="CoV Nsp1 globular" evidence="15">
    <location>
        <begin position="25"/>
        <end position="151"/>
    </location>
</feature>
<feature type="domain" description="BetaCoV Nsp1 C-terminal" evidence="16">
    <location>
        <begin position="159"/>
        <end position="195"/>
    </location>
</feature>
<feature type="domain" description="CoV Nsp2 N-terminal" evidence="17">
    <location>
        <begin position="197"/>
        <end position="473"/>
    </location>
</feature>
<feature type="domain" description="CoV Nsp2 middle" evidence="18">
    <location>
        <begin position="479"/>
        <end position="713"/>
    </location>
</feature>
<feature type="domain" description="CoV Nsp2 C-terminal" evidence="19">
    <location>
        <begin position="715"/>
        <end position="851"/>
    </location>
</feature>
<feature type="domain" description="Ubiquitin-like 1" evidence="4">
    <location>
        <begin position="855"/>
        <end position="964"/>
    </location>
</feature>
<feature type="domain" description="Macro 1" evidence="6">
    <location>
        <begin position="1186"/>
        <end position="1345"/>
    </location>
</feature>
<feature type="domain" description="Macro 2" evidence="6">
    <location>
        <begin position="1354"/>
        <end position="1480"/>
    </location>
</feature>
<feature type="domain" description="DPUP" evidence="8">
    <location>
        <begin position="1480"/>
        <end position="1553"/>
    </location>
</feature>
<feature type="domain" description="Ubiquitin-like 2" evidence="4">
    <location>
        <begin position="1558"/>
        <end position="1613"/>
    </location>
</feature>
<feature type="domain" description="Peptidase C16" evidence="5">
    <location>
        <begin position="1628"/>
        <end position="1902"/>
    </location>
</feature>
<feature type="domain" description="Nucleic acid-binding" evidence="9">
    <location>
        <begin position="1916"/>
        <end position="2033"/>
    </location>
</feature>
<feature type="domain" description="G2M" evidence="22">
    <location>
        <begin position="2059"/>
        <end position="2179"/>
    </location>
</feature>
<feature type="domain" description="3Ecto" evidence="21">
    <location>
        <begin position="2305"/>
        <end position="2371"/>
    </location>
</feature>
<feature type="domain" description="CoV Nsp3 Y" evidence="20">
    <location>
        <begin position="2455"/>
        <end position="2828"/>
    </location>
</feature>
<feature type="domain" description="Nsp4C" evidence="10">
    <location>
        <begin position="3242"/>
        <end position="3338"/>
    </location>
</feature>
<feature type="domain" description="Peptidase C30" evidence="7">
    <location>
        <begin position="3339"/>
        <end position="3644"/>
    </location>
</feature>
<feature type="domain" description="RdRp Nsp7 cofactor" evidence="11">
    <location>
        <begin position="3937"/>
        <end position="4019"/>
    </location>
</feature>
<feature type="domain" description="RdRp Nsp8 cofactor" evidence="12">
    <location>
        <begin position="4020"/>
        <end position="4218"/>
    </location>
</feature>
<feature type="domain" description="Nsp9 ssRNA-binding" evidence="13">
    <location>
        <begin position="4219"/>
        <end position="4328"/>
    </location>
</feature>
<feature type="domain" description="ExoN/MTase coactivator" evidence="14">
    <location>
        <begin position="4329"/>
        <end position="4467"/>
    </location>
</feature>
<feature type="zinc finger region" description="C4-type" evidence="5">
    <location>
        <begin position="1748"/>
        <end position="1785"/>
    </location>
</feature>
<feature type="zinc finger region" evidence="1">
    <location>
        <begin position="4402"/>
        <end position="4418"/>
    </location>
</feature>
<feature type="zinc finger region" evidence="1">
    <location>
        <begin position="4444"/>
        <end position="4457"/>
    </location>
</feature>
<feature type="region of interest" description="C4" evidence="17">
    <location>
        <begin position="340"/>
        <end position="361"/>
    </location>
</feature>
<feature type="region of interest" description="HD1" evidence="1">
    <location>
        <begin position="2158"/>
        <end position="2441"/>
    </location>
</feature>
<feature type="region of interest" description="Y1" evidence="20">
    <location>
        <begin position="2455"/>
        <end position="2545"/>
    </location>
</feature>
<feature type="region of interest" description="ZF1" evidence="20">
    <location>
        <begin position="2459"/>
        <end position="2472"/>
    </location>
</feature>
<feature type="region of interest" description="ZF2" evidence="20">
    <location>
        <begin position="2505"/>
        <end position="2515"/>
    </location>
</feature>
<feature type="region of interest" description="CoV-Y" evidence="20">
    <location>
        <begin position="2546"/>
        <end position="2828"/>
    </location>
</feature>
<feature type="region of interest" description="Y2" evidence="20">
    <location>
        <begin position="2546"/>
        <end position="2644"/>
    </location>
</feature>
<feature type="region of interest" description="Y3" evidence="20">
    <location>
        <begin position="2645"/>
        <end position="2727"/>
    </location>
</feature>
<feature type="region of interest" description="Y4" evidence="20">
    <location>
        <begin position="2728"/>
        <end position="2828"/>
    </location>
</feature>
<feature type="region of interest" description="HD2" evidence="1">
    <location>
        <begin position="2848"/>
        <end position="3223"/>
    </location>
</feature>
<feature type="region of interest" description="HD3" evidence="1">
    <location>
        <begin position="3650"/>
        <end position="3875"/>
    </location>
</feature>
<feature type="active site" description="For PL-PRO activity" evidence="5">
    <location>
        <position position="1668"/>
    </location>
</feature>
<feature type="active site" description="For PL-PRO activity" evidence="5">
    <location>
        <position position="1838"/>
    </location>
</feature>
<feature type="active site" description="For PL-PRO activity" evidence="5">
    <location>
        <position position="1853"/>
    </location>
</feature>
<feature type="active site" description="For 3CL-PRO activity" evidence="7">
    <location>
        <position position="3379"/>
    </location>
</feature>
<feature type="active site" description="For 3CL-PRO activity" evidence="7">
    <location>
        <position position="3486"/>
    </location>
</feature>
<feature type="binding site" evidence="17">
    <location>
        <position position="340"/>
    </location>
    <ligand>
        <name>Zn(2+)</name>
        <dbReference type="ChEBI" id="CHEBI:29105"/>
        <label>1</label>
    </ligand>
</feature>
<feature type="binding site" evidence="17">
    <location>
        <position position="343"/>
    </location>
    <ligand>
        <name>Zn(2+)</name>
        <dbReference type="ChEBI" id="CHEBI:29105"/>
        <label>1</label>
    </ligand>
</feature>
<feature type="binding site" evidence="17">
    <location>
        <position position="359"/>
    </location>
    <ligand>
        <name>Zn(2+)</name>
        <dbReference type="ChEBI" id="CHEBI:29105"/>
        <label>1</label>
    </ligand>
</feature>
<feature type="binding site" evidence="17">
    <location>
        <position position="361"/>
    </location>
    <ligand>
        <name>Zn(2+)</name>
        <dbReference type="ChEBI" id="CHEBI:29105"/>
        <label>1</label>
    </ligand>
</feature>
<feature type="binding site" evidence="5">
    <location>
        <position position="1748"/>
    </location>
    <ligand>
        <name>Zn(2+)</name>
        <dbReference type="ChEBI" id="CHEBI:29105"/>
        <label>2</label>
    </ligand>
</feature>
<feature type="binding site" evidence="5">
    <location>
        <position position="1751"/>
    </location>
    <ligand>
        <name>Zn(2+)</name>
        <dbReference type="ChEBI" id="CHEBI:29105"/>
        <label>2</label>
    </ligand>
</feature>
<feature type="binding site" evidence="5">
    <location>
        <position position="1783"/>
    </location>
    <ligand>
        <name>Zn(2+)</name>
        <dbReference type="ChEBI" id="CHEBI:29105"/>
        <label>2</label>
    </ligand>
</feature>
<feature type="binding site" evidence="5">
    <location>
        <position position="1785"/>
    </location>
    <ligand>
        <name>Zn(2+)</name>
        <dbReference type="ChEBI" id="CHEBI:29105"/>
        <label>2</label>
    </ligand>
</feature>
<feature type="binding site" evidence="20">
    <location>
        <position position="2459"/>
    </location>
    <ligand>
        <name>Zn(2+)</name>
        <dbReference type="ChEBI" id="CHEBI:29105"/>
        <label>3</label>
    </ligand>
</feature>
<feature type="binding site" evidence="20">
    <location>
        <position position="2464"/>
    </location>
    <ligand>
        <name>Zn(2+)</name>
        <dbReference type="ChEBI" id="CHEBI:29105"/>
        <label>3</label>
    </ligand>
</feature>
<feature type="binding site" evidence="20">
    <location>
        <position position="2469"/>
    </location>
    <ligand>
        <name>Zn(2+)</name>
        <dbReference type="ChEBI" id="CHEBI:29105"/>
        <label>3</label>
    </ligand>
</feature>
<feature type="binding site" evidence="20">
    <location>
        <position position="2472"/>
    </location>
    <ligand>
        <name>Zn(2+)</name>
        <dbReference type="ChEBI" id="CHEBI:29105"/>
        <label>3</label>
    </ligand>
</feature>
<feature type="binding site" evidence="20">
    <location>
        <position position="2505"/>
    </location>
    <ligand>
        <name>Zn(2+)</name>
        <dbReference type="ChEBI" id="CHEBI:29105"/>
        <label>4</label>
    </ligand>
</feature>
<feature type="binding site" evidence="20">
    <location>
        <position position="2508"/>
    </location>
    <ligand>
        <name>Zn(2+)</name>
        <dbReference type="ChEBI" id="CHEBI:29105"/>
        <label>4</label>
    </ligand>
</feature>
<feature type="binding site" evidence="20">
    <location>
        <position position="2512"/>
    </location>
    <ligand>
        <name>Zn(2+)</name>
        <dbReference type="ChEBI" id="CHEBI:29105"/>
        <label>4</label>
    </ligand>
</feature>
<feature type="binding site" evidence="20">
    <location>
        <position position="2515"/>
    </location>
    <ligand>
        <name>Zn(2+)</name>
        <dbReference type="ChEBI" id="CHEBI:29105"/>
        <label>4</label>
    </ligand>
</feature>
<feature type="binding site" evidence="14">
    <location>
        <position position="4402"/>
    </location>
    <ligand>
        <name>Zn(2+)</name>
        <dbReference type="ChEBI" id="CHEBI:29105"/>
        <label>5</label>
    </ligand>
</feature>
<feature type="binding site" evidence="14">
    <location>
        <position position="4405"/>
    </location>
    <ligand>
        <name>Zn(2+)</name>
        <dbReference type="ChEBI" id="CHEBI:29105"/>
        <label>5</label>
    </ligand>
</feature>
<feature type="binding site" evidence="14">
    <location>
        <position position="4411"/>
    </location>
    <ligand>
        <name>Zn(2+)</name>
        <dbReference type="ChEBI" id="CHEBI:29105"/>
        <label>5</label>
    </ligand>
</feature>
<feature type="binding site" evidence="14">
    <location>
        <position position="4418"/>
    </location>
    <ligand>
        <name>Zn(2+)</name>
        <dbReference type="ChEBI" id="CHEBI:29105"/>
        <label>5</label>
    </ligand>
</feature>
<feature type="binding site" evidence="14">
    <location>
        <position position="4444"/>
    </location>
    <ligand>
        <name>Zn(2+)</name>
        <dbReference type="ChEBI" id="CHEBI:29105"/>
        <label>6</label>
    </ligand>
</feature>
<feature type="binding site" evidence="14">
    <location>
        <position position="4447"/>
    </location>
    <ligand>
        <name>Zn(2+)</name>
        <dbReference type="ChEBI" id="CHEBI:29105"/>
        <label>6</label>
    </ligand>
</feature>
<feature type="binding site" evidence="14">
    <location>
        <position position="4455"/>
    </location>
    <ligand>
        <name>Zn(2+)</name>
        <dbReference type="ChEBI" id="CHEBI:29105"/>
        <label>6</label>
    </ligand>
</feature>
<feature type="binding site" evidence="14">
    <location>
        <position position="4457"/>
    </location>
    <ligand>
        <name>Zn(2+)</name>
        <dbReference type="ChEBI" id="CHEBI:29105"/>
        <label>6</label>
    </ligand>
</feature>
<feature type="site" description="Cleavage" evidence="3">
    <location>
        <begin position="195"/>
        <end position="196"/>
    </location>
</feature>
<feature type="site" description="Cleavage; by PL-PRO" evidence="3">
    <location>
        <begin position="851"/>
        <end position="852"/>
    </location>
</feature>
<feature type="site" description="Cleavage; by PL-PRO" evidence="3">
    <location>
        <begin position="2830"/>
        <end position="2831"/>
    </location>
</feature>
<feature type="site" description="Cleavage; by 3CL-PRO" evidence="3">
    <location>
        <begin position="3338"/>
        <end position="3339"/>
    </location>
</feature>
<feature type="site" description="Cleavage; by 3CL-PRO" evidence="3">
    <location>
        <begin position="3644"/>
        <end position="3645"/>
    </location>
</feature>
<feature type="site" description="Cleavage; by 3CL-PRO" evidence="3">
    <location>
        <begin position="3936"/>
        <end position="3937"/>
    </location>
</feature>
<feature type="site" description="Cleavage; by 3CL-PRO" evidence="3">
    <location>
        <begin position="4019"/>
        <end position="4020"/>
    </location>
</feature>
<feature type="site" description="Cleavage; by 3CL-PRO" evidence="3">
    <location>
        <begin position="4218"/>
        <end position="4219"/>
    </location>
</feature>
<feature type="site" description="Cleavage; by 3CL-PRO" evidence="3">
    <location>
        <begin position="4328"/>
        <end position="4329"/>
    </location>
</feature>
<feature type="site" description="Cleavage; by 3CL-PRO" evidence="3">
    <location>
        <begin position="4467"/>
        <end position="4468"/>
    </location>
</feature>
<feature type="disulfide bond" evidence="21">
    <location>
        <begin position="2321"/>
        <end position="2349"/>
    </location>
</feature>
<feature type="disulfide bond" evidence="21">
    <location>
        <begin position="2339"/>
        <end position="2346"/>
    </location>
</feature>
<organism>
    <name type="scientific">Bat coronavirus HKU5</name>
    <name type="common">BtCoV</name>
    <name type="synonym">BtCoV/HKU5/2004</name>
    <dbReference type="NCBI Taxonomy" id="694008"/>
    <lineage>
        <taxon>Viruses</taxon>
        <taxon>Riboviria</taxon>
        <taxon>Orthornavirae</taxon>
        <taxon>Pisuviricota</taxon>
        <taxon>Pisoniviricetes</taxon>
        <taxon>Nidovirales</taxon>
        <taxon>Cornidovirineae</taxon>
        <taxon>Coronaviridae</taxon>
        <taxon>Orthocoronavirinae</taxon>
        <taxon>Betacoronavirus</taxon>
        <taxon>Merbecovirus</taxon>
    </lineage>
</organism>
<accession>P0C6T5</accession>
<accession>A3EXC9</accession>
<protein>
    <recommendedName>
        <fullName>Replicase polyprotein 1a</fullName>
        <shortName>pp1a</shortName>
    </recommendedName>
    <alternativeName>
        <fullName>ORF1a polyprotein</fullName>
    </alternativeName>
    <component>
        <recommendedName>
            <fullName>Non-structural protein 1</fullName>
            <shortName>nsp1</shortName>
        </recommendedName>
        <alternativeName>
            <fullName>Leader protein</fullName>
        </alternativeName>
    </component>
    <component>
        <recommendedName>
            <fullName>Non-structural protein 2</fullName>
            <shortName>nsp2</shortName>
        </recommendedName>
        <alternativeName>
            <fullName>p65 homolog</fullName>
        </alternativeName>
    </component>
    <component>
        <recommendedName>
            <fullName>Papain-like protease nsp3</fullName>
            <shortName>PL-PRO</shortName>
            <ecNumber>3.4.19.12</ecNumber>
            <ecNumber>3.4.22.-</ecNumber>
        </recommendedName>
        <alternativeName>
            <fullName>Non-structural protein 3</fullName>
            <shortName>nsp3</shortName>
        </alternativeName>
        <alternativeName>
            <fullName>PL2-PRO</fullName>
        </alternativeName>
    </component>
    <component>
        <recommendedName>
            <fullName>Non-structural protein 4</fullName>
            <shortName>nsp4</shortName>
        </recommendedName>
    </component>
    <component>
        <recommendedName>
            <fullName>3C-like proteinase nsp5</fullName>
            <shortName>3CL-PRO</shortName>
            <shortName>3CLp</shortName>
            <ecNumber>3.4.22.69</ecNumber>
        </recommendedName>
        <alternativeName>
            <fullName>nsp5</fullName>
        </alternativeName>
    </component>
    <component>
        <recommendedName>
            <fullName>Non-structural protein 6</fullName>
            <shortName>nsp6</shortName>
        </recommendedName>
    </component>
    <component>
        <recommendedName>
            <fullName>Non-structural protein 7</fullName>
            <shortName>nsp7</shortName>
        </recommendedName>
    </component>
    <component>
        <recommendedName>
            <fullName>Non-structural protein 8</fullName>
            <shortName>nsp8</shortName>
        </recommendedName>
    </component>
    <component>
        <recommendedName>
            <fullName>RNA-capping enzyme subunit nsp9</fullName>
        </recommendedName>
        <alternativeName>
            <fullName>Non-structural protein 9</fullName>
            <shortName>nsp9</shortName>
            <ecNumber>2.7.7.50</ecNumber>
        </alternativeName>
    </component>
    <component>
        <recommendedName>
            <fullName>Non-structural protein 10</fullName>
            <shortName>nsp10</shortName>
        </recommendedName>
        <alternativeName>
            <fullName>Growth factor-like peptide</fullName>
            <shortName>GFL</shortName>
        </alternativeName>
    </component>
    <component>
        <recommendedName>
            <fullName>Non-structural protein 11</fullName>
            <shortName>nsp11</shortName>
        </recommendedName>
    </component>
</protein>
<comment type="function">
    <text evidence="1">The papain-like proteinase (PL-PRO) is responsible for the cleavages located at the N-terminus of replicase polyprotein. In addition, PL-PRO possesses a deubiquitinating/deISGylating activity and processes both 'Lys-48'- and 'Lys-63'-linked polyubiquitin chains from cellular substrates. Antagonizes innate immune induction of type I interferon by blocking the phosphorylation, dimerization and subsequent nuclear translocation of host IRF-3 (By similarity).</text>
</comment>
<comment type="function">
    <molecule>3C-like proteinase nsp5</molecule>
    <text evidence="7">Responsible for the majority of cleavages as it cleaves the C-terminus of replicase polyprotein at 11 sites. Recognizes substrates containing the core sequence [ILMVF]-Q-|-[SGACN]. Inhibited by the substrate-analog Cbz-Val-Asn-Ser-Thr-Leu-Gln-CMK. Also contains an ADP-ribose-1''-phosphate (ADRP)-binding function (By similarity).</text>
</comment>
<comment type="function">
    <text evidence="1">Nsp7-nsp8 hexadecamer may possibly confer processivity to the polymerase, maybe by binding to dsRNA or by producing primers utilized by the latter.</text>
</comment>
<comment type="function">
    <molecule>RNA-capping enzyme subunit nsp9</molecule>
    <text evidence="2">Catalytic subunit of viral RNA capping enzyme which catalyzes the RNA guanylyltransferase reaction for genomic and sub-genomic RNAs. The kinase-like NiRAN domain of NSP12 transfers RNA to the amino terminus of NSP9, forming a covalent RNA-protein intermediate. Subsequently, the NiRAN domain transfers RNA to GDP, forming the core cap structure GpppA-RNA. The NSP14 and NSP16 methyltransferases then add methyl groups to form functional cap structures.</text>
</comment>
<comment type="catalytic activity">
    <molecule>Papain-like protease nsp3</molecule>
    <reaction evidence="2">
        <text>Thiol-dependent hydrolysis of ester, thioester, amide, peptide and isopeptide bonds formed by the C-terminal Gly of ubiquitin (a 76-residue protein attached to proteins as an intracellular targeting signal).</text>
        <dbReference type="EC" id="3.4.19.12"/>
    </reaction>
</comment>
<comment type="catalytic activity">
    <molecule>3C-like proteinase nsp5</molecule>
    <reaction evidence="2">
        <text>TSAVLQ-|-SGFRK-NH2 and SGVTFQ-|-GKFKK the two peptides corresponding to the two self-cleavage sites of the SARS 3C-like proteinase are the two most reactive peptide substrates. The enzyme exhibits a strong preference for substrates containing Gln at P1 position and Leu at P2 position.</text>
        <dbReference type="EC" id="3.4.22.69"/>
    </reaction>
</comment>
<comment type="catalytic activity">
    <molecule>RNA-capping enzyme subunit nsp9</molecule>
    <reaction evidence="2">
        <text>a 5'-end diphospho-ribonucleoside in mRNA + GTP + H(+) = a 5'-end (5'-triphosphoguanosine)-ribonucleoside in mRNA + diphosphate</text>
        <dbReference type="Rhea" id="RHEA:67012"/>
        <dbReference type="Rhea" id="RHEA-COMP:17165"/>
        <dbReference type="Rhea" id="RHEA-COMP:17166"/>
        <dbReference type="ChEBI" id="CHEBI:15378"/>
        <dbReference type="ChEBI" id="CHEBI:33019"/>
        <dbReference type="ChEBI" id="CHEBI:37565"/>
        <dbReference type="ChEBI" id="CHEBI:167616"/>
        <dbReference type="ChEBI" id="CHEBI:167617"/>
        <dbReference type="EC" id="2.7.7.50"/>
    </reaction>
    <physiologicalReaction direction="right-to-left" evidence="2">
        <dbReference type="Rhea" id="RHEA:67014"/>
    </physiologicalReaction>
</comment>
<comment type="subunit">
    <text evidence="1">3CL-PRO exists as monomer and homodimer. Eight copies of nsp7 and eight copies of nsp8 assemble to form a heterohexadecamer. Nsp9 is a dimer. Nsp10 forms a dodecamer (By similarity).</text>
</comment>
<comment type="subcellular location">
    <molecule>Papain-like protease nsp3</molecule>
    <subcellularLocation>
        <location evidence="23">Host membrane</location>
        <topology evidence="23">Multi-pass membrane protein</topology>
    </subcellularLocation>
</comment>
<comment type="subcellular location">
    <molecule>Non-structural protein 4</molecule>
    <subcellularLocation>
        <location evidence="23">Host membrane</location>
        <topology evidence="23">Multi-pass membrane protein</topology>
    </subcellularLocation>
</comment>
<comment type="subcellular location">
    <molecule>Non-structural protein 6</molecule>
    <subcellularLocation>
        <location evidence="23">Host membrane</location>
        <topology evidence="23">Multi-pass membrane protein</topology>
    </subcellularLocation>
</comment>
<comment type="subcellular location">
    <molecule>Non-structural protein 7</molecule>
    <subcellularLocation>
        <location evidence="1">Host cytoplasm</location>
        <location evidence="1">Host perinuclear region</location>
    </subcellularLocation>
    <text evidence="1">nsp7, nsp8, nsp9 and nsp10 are localized in cytoplasmic foci, largely perinuclear. Late in infection, they merge into confluent complexes (By similarity).</text>
</comment>
<comment type="subcellular location">
    <molecule>Non-structural protein 8</molecule>
    <subcellularLocation>
        <location evidence="1">Host cytoplasm</location>
        <location evidence="1">Host perinuclear region</location>
    </subcellularLocation>
    <text evidence="1">nsp7, nsp8, nsp9 and nsp10 are localized in cytoplasmic foci, largely perinuclear. Late in infection, they merge into confluent complexes (By similarity).</text>
</comment>
<comment type="subcellular location">
    <molecule>RNA-capping enzyme subunit nsp9</molecule>
    <subcellularLocation>
        <location evidence="1">Host cytoplasm</location>
        <location evidence="1">Host perinuclear region</location>
    </subcellularLocation>
    <text evidence="1">nsp7, nsp8, nsp9 and nsp10 are localized in cytoplasmic foci, largely perinuclear. Late in infection, they merge into confluent complexes (By similarity).</text>
</comment>
<comment type="subcellular location">
    <molecule>Non-structural protein 10</molecule>
    <subcellularLocation>
        <location evidence="1">Host cytoplasm</location>
        <location evidence="1">Host perinuclear region</location>
    </subcellularLocation>
    <text evidence="1">nsp7, nsp8, nsp9 and nsp10 are localized in cytoplasmic foci, largely perinuclear. Late in infection, they merge into confluent complexes (By similarity).</text>
</comment>
<comment type="alternative products">
    <event type="ribosomal frameshifting"/>
    <isoform>
        <id>P0C6T5-1</id>
        <name>Replicase polyprotein 1a</name>
        <name>pp1a</name>
        <name>ORF1a polyprotein</name>
        <sequence type="displayed"/>
    </isoform>
    <isoform>
        <id>P0C6W4-1</id>
        <name>Replicase polyprotein 1ab</name>
        <name>pp1ab</name>
        <sequence type="external"/>
    </isoform>
</comment>
<comment type="domain">
    <text evidence="1">The hydrophobic domains (HD) could mediate the membrane association of the replication complex and thereby alter the architecture of the host cell membrane.</text>
</comment>
<comment type="PTM">
    <text evidence="1">Specific enzymatic cleavages in vivo by its own proteases yield mature proteins. 3CL-PRO and PL-PRO proteinases are autocatalytically processed (By similarity).</text>
</comment>
<comment type="miscellaneous">
    <molecule>Isoform Replicase polyprotein 1a</molecule>
    <text>Produced by conventional translation.</text>
</comment>
<comment type="similarity">
    <text evidence="23">Belongs to the coronaviruses polyprotein 1ab family.</text>
</comment>